<evidence type="ECO:0000255" key="1">
    <source>
        <dbReference type="HAMAP-Rule" id="MF_01007"/>
    </source>
</evidence>
<proteinExistence type="inferred from homology"/>
<protein>
    <recommendedName>
        <fullName evidence="1">Ribosomal RNA small subunit methyltransferase H</fullName>
        <ecNumber evidence="1">2.1.1.199</ecNumber>
    </recommendedName>
    <alternativeName>
        <fullName evidence="1">16S rRNA m(4)C1402 methyltransferase</fullName>
    </alternativeName>
    <alternativeName>
        <fullName evidence="1">rRNA (cytosine-N(4)-)-methyltransferase RsmH</fullName>
    </alternativeName>
</protein>
<gene>
    <name evidence="1" type="primary">rsmH</name>
    <name type="synonym">mraW</name>
    <name type="ordered locus">Kole_1911</name>
</gene>
<dbReference type="EC" id="2.1.1.199" evidence="1"/>
<dbReference type="EMBL" id="CP001634">
    <property type="protein sequence ID" value="ACR80592.1"/>
    <property type="molecule type" value="Genomic_DNA"/>
</dbReference>
<dbReference type="SMR" id="C5CGS3"/>
<dbReference type="STRING" id="521045.Kole_1911"/>
<dbReference type="KEGG" id="kol:Kole_1911"/>
<dbReference type="eggNOG" id="COG0275">
    <property type="taxonomic scope" value="Bacteria"/>
</dbReference>
<dbReference type="HOGENOM" id="CLU_038422_3_0_0"/>
<dbReference type="OrthoDB" id="9806637at2"/>
<dbReference type="Proteomes" id="UP000002382">
    <property type="component" value="Chromosome"/>
</dbReference>
<dbReference type="GO" id="GO:0005737">
    <property type="term" value="C:cytoplasm"/>
    <property type="evidence" value="ECO:0007669"/>
    <property type="project" value="UniProtKB-SubCell"/>
</dbReference>
<dbReference type="GO" id="GO:0071424">
    <property type="term" value="F:rRNA (cytosine-N4-)-methyltransferase activity"/>
    <property type="evidence" value="ECO:0007669"/>
    <property type="project" value="UniProtKB-UniRule"/>
</dbReference>
<dbReference type="GO" id="GO:0070475">
    <property type="term" value="P:rRNA base methylation"/>
    <property type="evidence" value="ECO:0007669"/>
    <property type="project" value="UniProtKB-UniRule"/>
</dbReference>
<dbReference type="CDD" id="cd02440">
    <property type="entry name" value="AdoMet_MTases"/>
    <property type="match status" value="1"/>
</dbReference>
<dbReference type="Gene3D" id="1.10.150.170">
    <property type="entry name" value="Putative methyltransferase TM0872, insert domain"/>
    <property type="match status" value="1"/>
</dbReference>
<dbReference type="Gene3D" id="3.40.50.150">
    <property type="entry name" value="Vaccinia Virus protein VP39"/>
    <property type="match status" value="1"/>
</dbReference>
<dbReference type="HAMAP" id="MF_01007">
    <property type="entry name" value="16SrRNA_methyltr_H"/>
    <property type="match status" value="1"/>
</dbReference>
<dbReference type="InterPro" id="IPR002903">
    <property type="entry name" value="RsmH"/>
</dbReference>
<dbReference type="InterPro" id="IPR023397">
    <property type="entry name" value="SAM-dep_MeTrfase_MraW_recog"/>
</dbReference>
<dbReference type="InterPro" id="IPR029063">
    <property type="entry name" value="SAM-dependent_MTases_sf"/>
</dbReference>
<dbReference type="NCBIfam" id="TIGR00006">
    <property type="entry name" value="16S rRNA (cytosine(1402)-N(4))-methyltransferase RsmH"/>
    <property type="match status" value="1"/>
</dbReference>
<dbReference type="PANTHER" id="PTHR11265:SF0">
    <property type="entry name" value="12S RRNA N4-METHYLCYTIDINE METHYLTRANSFERASE"/>
    <property type="match status" value="1"/>
</dbReference>
<dbReference type="PANTHER" id="PTHR11265">
    <property type="entry name" value="S-ADENOSYL-METHYLTRANSFERASE MRAW"/>
    <property type="match status" value="1"/>
</dbReference>
<dbReference type="Pfam" id="PF01795">
    <property type="entry name" value="Methyltransf_5"/>
    <property type="match status" value="1"/>
</dbReference>
<dbReference type="PIRSF" id="PIRSF004486">
    <property type="entry name" value="MraW"/>
    <property type="match status" value="1"/>
</dbReference>
<dbReference type="SUPFAM" id="SSF81799">
    <property type="entry name" value="Putative methyltransferase TM0872, insert domain"/>
    <property type="match status" value="1"/>
</dbReference>
<dbReference type="SUPFAM" id="SSF53335">
    <property type="entry name" value="S-adenosyl-L-methionine-dependent methyltransferases"/>
    <property type="match status" value="1"/>
</dbReference>
<accession>C5CGS3</accession>
<name>RSMH_KOSOT</name>
<organism>
    <name type="scientific">Kosmotoga olearia (strain ATCC BAA-1733 / DSM 21960 / TBF 19.5.1)</name>
    <dbReference type="NCBI Taxonomy" id="521045"/>
    <lineage>
        <taxon>Bacteria</taxon>
        <taxon>Thermotogati</taxon>
        <taxon>Thermotogota</taxon>
        <taxon>Thermotogae</taxon>
        <taxon>Kosmotogales</taxon>
        <taxon>Kosmotogaceae</taxon>
        <taxon>Kosmotoga</taxon>
    </lineage>
</organism>
<feature type="chain" id="PRO_0000386938" description="Ribosomal RNA small subunit methyltransferase H">
    <location>
        <begin position="1"/>
        <end position="298"/>
    </location>
</feature>
<feature type="binding site" evidence="1">
    <location>
        <begin position="37"/>
        <end position="39"/>
    </location>
    <ligand>
        <name>S-adenosyl-L-methionine</name>
        <dbReference type="ChEBI" id="CHEBI:59789"/>
    </ligand>
</feature>
<feature type="binding site" evidence="1">
    <location>
        <position position="57"/>
    </location>
    <ligand>
        <name>S-adenosyl-L-methionine</name>
        <dbReference type="ChEBI" id="CHEBI:59789"/>
    </ligand>
</feature>
<feature type="binding site" evidence="1">
    <location>
        <position position="91"/>
    </location>
    <ligand>
        <name>S-adenosyl-L-methionine</name>
        <dbReference type="ChEBI" id="CHEBI:59789"/>
    </ligand>
</feature>
<feature type="binding site" evidence="1">
    <location>
        <position position="105"/>
    </location>
    <ligand>
        <name>S-adenosyl-L-methionine</name>
        <dbReference type="ChEBI" id="CHEBI:59789"/>
    </ligand>
</feature>
<feature type="binding site" evidence="1">
    <location>
        <position position="112"/>
    </location>
    <ligand>
        <name>S-adenosyl-L-methionine</name>
        <dbReference type="ChEBI" id="CHEBI:59789"/>
    </ligand>
</feature>
<comment type="function">
    <text evidence="1">Specifically methylates the N4 position of cytidine in position 1402 (C1402) of 16S rRNA.</text>
</comment>
<comment type="catalytic activity">
    <reaction evidence="1">
        <text>cytidine(1402) in 16S rRNA + S-adenosyl-L-methionine = N(4)-methylcytidine(1402) in 16S rRNA + S-adenosyl-L-homocysteine + H(+)</text>
        <dbReference type="Rhea" id="RHEA:42928"/>
        <dbReference type="Rhea" id="RHEA-COMP:10286"/>
        <dbReference type="Rhea" id="RHEA-COMP:10287"/>
        <dbReference type="ChEBI" id="CHEBI:15378"/>
        <dbReference type="ChEBI" id="CHEBI:57856"/>
        <dbReference type="ChEBI" id="CHEBI:59789"/>
        <dbReference type="ChEBI" id="CHEBI:74506"/>
        <dbReference type="ChEBI" id="CHEBI:82748"/>
        <dbReference type="EC" id="2.1.1.199"/>
    </reaction>
</comment>
<comment type="subcellular location">
    <subcellularLocation>
        <location evidence="1">Cytoplasm</location>
    </subcellularLocation>
</comment>
<comment type="similarity">
    <text evidence="1">Belongs to the methyltransferase superfamily. RsmH family.</text>
</comment>
<reference key="1">
    <citation type="submission" date="2009-06" db="EMBL/GenBank/DDBJ databases">
        <title>Complete sequence of Thermotogales bacterium TBF 19.5.1.</title>
        <authorList>
            <consortium name="US DOE Joint Genome Institute"/>
            <person name="Lucas S."/>
            <person name="Copeland A."/>
            <person name="Lapidus A."/>
            <person name="Glavina del Rio T."/>
            <person name="Tice H."/>
            <person name="Bruce D."/>
            <person name="Goodwin L."/>
            <person name="Pitluck S."/>
            <person name="Chertkov O."/>
            <person name="Brettin T."/>
            <person name="Detter J.C."/>
            <person name="Han C."/>
            <person name="Schmutz J."/>
            <person name="Larimer F."/>
            <person name="Land M."/>
            <person name="Hauser L."/>
            <person name="Kyrpides N."/>
            <person name="Ovchinnikova G."/>
            <person name="Noll K."/>
        </authorList>
    </citation>
    <scope>NUCLEOTIDE SEQUENCE [LARGE SCALE GENOMIC DNA]</scope>
    <source>
        <strain>ATCC BAA-1733 / DSM 21960 / TBF 19.5.1</strain>
    </source>
</reference>
<keyword id="KW-0963">Cytoplasm</keyword>
<keyword id="KW-0489">Methyltransferase</keyword>
<keyword id="KW-1185">Reference proteome</keyword>
<keyword id="KW-0698">rRNA processing</keyword>
<keyword id="KW-0949">S-adenosyl-L-methionine</keyword>
<keyword id="KW-0808">Transferase</keyword>
<sequence length="298" mass="34045">MQRQYNESHRSVMVQETLHYLRPTYNGVYVDGTLGEGGHTKAIIEATSGKCKVIGLDIDEEVLAIAEQNLKEFKENVELFNVSYVDFDLVLESLAVDKVDGFLLDIGVSTYQLKAKGRGFSYEIDEPLDMRMSLSGSVTAADVVNSYPEKELARIIFEYGEEKRYARRIARKIVERRPIQTTIQLVEAIKAALPPQERFRRKRHYATRTFQAIRIEVNGELKGLRTALEKFPNYLKPGGRIVIISFHSLEDRTVKHFFREQDGVTLKILTRKPVVPSVEEVSENPRARSAKLRAAERI</sequence>